<organism>
    <name type="scientific">Shewanella sp. (strain ANA-3)</name>
    <dbReference type="NCBI Taxonomy" id="94122"/>
    <lineage>
        <taxon>Bacteria</taxon>
        <taxon>Pseudomonadati</taxon>
        <taxon>Pseudomonadota</taxon>
        <taxon>Gammaproteobacteria</taxon>
        <taxon>Alteromonadales</taxon>
        <taxon>Shewanellaceae</taxon>
        <taxon>Shewanella</taxon>
    </lineage>
</organism>
<protein>
    <recommendedName>
        <fullName evidence="1">N-succinylarginine dihydrolase</fullName>
        <ecNumber evidence="1">3.5.3.23</ecNumber>
    </recommendedName>
</protein>
<sequence>MKHFEANFDGLVGPTHNYAGLSFGNVASLNNAALVSNPKAAAKQGLQKAKALADLGMIQGMLAPQERPDLNTLRRIGFSGSDAQVLQQAAKTAPALLNACCSASSMWTANAATVSPSADTRDGKLHFTPANLVDKLHRSIEPTTTGRILTATFNDPHYFHHHNHLPEHNSFGDEGAANHTRLCQEYGHAGVELFVYGQEATNPNAPRPQKYPARQTLEASMAIARLHQLEEDNCVFIQQNPDVIDQGVFHNDVIAVGNQNVLFYHEQAFLNTQAKLDEIRRKLDTELFFIEVPTTKVAINNAVKSYLFNTQIITLPSGEMAIIAPTDCQENPAVYAYLNELLTLNTPIKQVLYFDVKQSMQNGGGPACLRLRVAMNEREVAAANQHTLLNDALFARLNTWVDKHYRDRLSTQDLADPQLVVESRTALDELTQIMKLGSVYPFQR</sequence>
<evidence type="ECO:0000255" key="1">
    <source>
        <dbReference type="HAMAP-Rule" id="MF_01172"/>
    </source>
</evidence>
<comment type="function">
    <text evidence="1">Catalyzes the hydrolysis of N(2)-succinylarginine into N(2)-succinylornithine, ammonia and CO(2).</text>
</comment>
<comment type="catalytic activity">
    <reaction evidence="1">
        <text>N(2)-succinyl-L-arginine + 2 H2O + 2 H(+) = N(2)-succinyl-L-ornithine + 2 NH4(+) + CO2</text>
        <dbReference type="Rhea" id="RHEA:19533"/>
        <dbReference type="ChEBI" id="CHEBI:15377"/>
        <dbReference type="ChEBI" id="CHEBI:15378"/>
        <dbReference type="ChEBI" id="CHEBI:16526"/>
        <dbReference type="ChEBI" id="CHEBI:28938"/>
        <dbReference type="ChEBI" id="CHEBI:58241"/>
        <dbReference type="ChEBI" id="CHEBI:58514"/>
        <dbReference type="EC" id="3.5.3.23"/>
    </reaction>
</comment>
<comment type="pathway">
    <text evidence="1">Amino-acid degradation; L-arginine degradation via AST pathway; L-glutamate and succinate from L-arginine: step 2/5.</text>
</comment>
<comment type="subunit">
    <text evidence="1">Homodimer.</text>
</comment>
<comment type="similarity">
    <text evidence="1">Belongs to the succinylarginine dihydrolase family.</text>
</comment>
<name>ASTB_SHESA</name>
<proteinExistence type="inferred from homology"/>
<keyword id="KW-0056">Arginine metabolism</keyword>
<keyword id="KW-0378">Hydrolase</keyword>
<accession>A0KVZ2</accession>
<gene>
    <name evidence="1" type="primary">astB</name>
    <name type="ordered locus">Shewana3_1728</name>
</gene>
<dbReference type="EC" id="3.5.3.23" evidence="1"/>
<dbReference type="EMBL" id="CP000469">
    <property type="protein sequence ID" value="ABK47961.1"/>
    <property type="molecule type" value="Genomic_DNA"/>
</dbReference>
<dbReference type="RefSeq" id="WP_011716750.1">
    <property type="nucleotide sequence ID" value="NC_008577.1"/>
</dbReference>
<dbReference type="SMR" id="A0KVZ2"/>
<dbReference type="STRING" id="94122.Shewana3_1728"/>
<dbReference type="KEGG" id="shn:Shewana3_1728"/>
<dbReference type="eggNOG" id="COG3724">
    <property type="taxonomic scope" value="Bacteria"/>
</dbReference>
<dbReference type="HOGENOM" id="CLU_053835_0_0_6"/>
<dbReference type="OrthoDB" id="248552at2"/>
<dbReference type="UniPathway" id="UPA00185">
    <property type="reaction ID" value="UER00280"/>
</dbReference>
<dbReference type="Proteomes" id="UP000002589">
    <property type="component" value="Chromosome"/>
</dbReference>
<dbReference type="GO" id="GO:0009015">
    <property type="term" value="F:N-succinylarginine dihydrolase activity"/>
    <property type="evidence" value="ECO:0007669"/>
    <property type="project" value="UniProtKB-UniRule"/>
</dbReference>
<dbReference type="GO" id="GO:0019544">
    <property type="term" value="P:arginine catabolic process to glutamate"/>
    <property type="evidence" value="ECO:0007669"/>
    <property type="project" value="UniProtKB-UniRule"/>
</dbReference>
<dbReference type="GO" id="GO:0019545">
    <property type="term" value="P:arginine catabolic process to succinate"/>
    <property type="evidence" value="ECO:0007669"/>
    <property type="project" value="UniProtKB-UniRule"/>
</dbReference>
<dbReference type="Gene3D" id="3.75.10.20">
    <property type="entry name" value="Succinylarginine dihydrolase"/>
    <property type="match status" value="1"/>
</dbReference>
<dbReference type="HAMAP" id="MF_01172">
    <property type="entry name" value="AstB"/>
    <property type="match status" value="1"/>
</dbReference>
<dbReference type="InterPro" id="IPR037031">
    <property type="entry name" value="AstB_sf"/>
</dbReference>
<dbReference type="InterPro" id="IPR007079">
    <property type="entry name" value="SuccinylArg_d-Hdrlase_AstB"/>
</dbReference>
<dbReference type="NCBIfam" id="TIGR03241">
    <property type="entry name" value="arg_catab_astB"/>
    <property type="match status" value="1"/>
</dbReference>
<dbReference type="NCBIfam" id="NF009789">
    <property type="entry name" value="PRK13281.1"/>
    <property type="match status" value="1"/>
</dbReference>
<dbReference type="PANTHER" id="PTHR30420">
    <property type="entry name" value="N-SUCCINYLARGININE DIHYDROLASE"/>
    <property type="match status" value="1"/>
</dbReference>
<dbReference type="PANTHER" id="PTHR30420:SF2">
    <property type="entry name" value="N-SUCCINYLARGININE DIHYDROLASE"/>
    <property type="match status" value="1"/>
</dbReference>
<dbReference type="Pfam" id="PF04996">
    <property type="entry name" value="AstB"/>
    <property type="match status" value="1"/>
</dbReference>
<dbReference type="SUPFAM" id="SSF55909">
    <property type="entry name" value="Pentein"/>
    <property type="match status" value="1"/>
</dbReference>
<feature type="chain" id="PRO_1000065740" description="N-succinylarginine dihydrolase">
    <location>
        <begin position="1"/>
        <end position="444"/>
    </location>
</feature>
<feature type="active site" evidence="1">
    <location>
        <position position="174"/>
    </location>
</feature>
<feature type="active site" evidence="1">
    <location>
        <position position="250"/>
    </location>
</feature>
<feature type="active site" description="Nucleophile" evidence="1">
    <location>
        <position position="368"/>
    </location>
</feature>
<feature type="binding site" evidence="1">
    <location>
        <begin position="19"/>
        <end position="28"/>
    </location>
    <ligand>
        <name>substrate</name>
    </ligand>
</feature>
<feature type="binding site" evidence="1">
    <location>
        <position position="110"/>
    </location>
    <ligand>
        <name>substrate</name>
    </ligand>
</feature>
<feature type="binding site" evidence="1">
    <location>
        <begin position="137"/>
        <end position="138"/>
    </location>
    <ligand>
        <name>substrate</name>
    </ligand>
</feature>
<feature type="binding site" evidence="1">
    <location>
        <position position="214"/>
    </location>
    <ligand>
        <name>substrate</name>
    </ligand>
</feature>
<feature type="binding site" evidence="1">
    <location>
        <position position="252"/>
    </location>
    <ligand>
        <name>substrate</name>
    </ligand>
</feature>
<feature type="binding site" evidence="1">
    <location>
        <position position="362"/>
    </location>
    <ligand>
        <name>substrate</name>
    </ligand>
</feature>
<reference key="1">
    <citation type="submission" date="2006-09" db="EMBL/GenBank/DDBJ databases">
        <title>Complete sequence of chromosome 1 of Shewanella sp. ANA-3.</title>
        <authorList>
            <person name="Copeland A."/>
            <person name="Lucas S."/>
            <person name="Lapidus A."/>
            <person name="Barry K."/>
            <person name="Detter J.C."/>
            <person name="Glavina del Rio T."/>
            <person name="Hammon N."/>
            <person name="Israni S."/>
            <person name="Dalin E."/>
            <person name="Tice H."/>
            <person name="Pitluck S."/>
            <person name="Chertkov O."/>
            <person name="Brettin T."/>
            <person name="Bruce D."/>
            <person name="Han C."/>
            <person name="Tapia R."/>
            <person name="Gilna P."/>
            <person name="Schmutz J."/>
            <person name="Larimer F."/>
            <person name="Land M."/>
            <person name="Hauser L."/>
            <person name="Kyrpides N."/>
            <person name="Kim E."/>
            <person name="Newman D."/>
            <person name="Salticov C."/>
            <person name="Konstantinidis K."/>
            <person name="Klappenback J."/>
            <person name="Tiedje J."/>
            <person name="Richardson P."/>
        </authorList>
    </citation>
    <scope>NUCLEOTIDE SEQUENCE [LARGE SCALE GENOMIC DNA]</scope>
    <source>
        <strain>ANA-3</strain>
    </source>
</reference>